<name>FLGI_SULSY</name>
<protein>
    <recommendedName>
        <fullName evidence="1">Flagellar P-ring protein</fullName>
    </recommendedName>
    <alternativeName>
        <fullName evidence="1">Basal body P-ring protein</fullName>
    </alternativeName>
</protein>
<organism>
    <name type="scientific">Sulfurihydrogenibium sp. (strain YO3AOP1)</name>
    <dbReference type="NCBI Taxonomy" id="436114"/>
    <lineage>
        <taxon>Bacteria</taxon>
        <taxon>Pseudomonadati</taxon>
        <taxon>Aquificota</taxon>
        <taxon>Aquificia</taxon>
        <taxon>Aquificales</taxon>
        <taxon>Hydrogenothermaceae</taxon>
        <taxon>Sulfurihydrogenibium</taxon>
    </lineage>
</organism>
<comment type="function">
    <text evidence="1">Assembles around the rod to form the L-ring and probably protects the motor/basal body from shearing forces during rotation.</text>
</comment>
<comment type="subunit">
    <text evidence="1">The basal body constitutes a major portion of the flagellar organelle and consists of four rings (L,P,S, and M) mounted on a central rod.</text>
</comment>
<comment type="subcellular location">
    <subcellularLocation>
        <location evidence="1">Periplasm</location>
    </subcellularLocation>
    <subcellularLocation>
        <location evidence="1">Bacterial flagellum basal body</location>
    </subcellularLocation>
</comment>
<comment type="similarity">
    <text evidence="1">Belongs to the FlgI family.</text>
</comment>
<keyword id="KW-0975">Bacterial flagellum</keyword>
<keyword id="KW-0574">Periplasm</keyword>
<keyword id="KW-0732">Signal</keyword>
<sequence>MWKKVLIAIVFITSFSFAAEVKIRDEVYVEGFRPNYLTGYGIVVGLNGTGDGTTSRYTLISIANMLRKLGIYIDPAQVRTKNAAAVMVTANLPPFAKPGMAIDVQVASIGDAKDIVNGLLIRTPLYGPDGKIYAFAQGPVSTGGGFLESNKGGKVQKGFPTAGIIPNGAIVEEELPFDFNSMTEVTLSLKNPSFSKAQEIVNVINQKYPGLAVVQDPTSIKVRLPQTKNKTEFLAEILDLKIKTDKDNIPTIVFYEKTGTVIMSGDVAIDTPVYVSHGSIYVTVEKTPVISQPPPLSGGQTVVTEGVTTKVQEEKGRIISIESAKLSDLVKALNDLGVSPYDLIAILQAIKAAGKLHAEIKVM</sequence>
<evidence type="ECO:0000255" key="1">
    <source>
        <dbReference type="HAMAP-Rule" id="MF_00416"/>
    </source>
</evidence>
<gene>
    <name evidence="1" type="primary">flgI</name>
    <name type="ordered locus">SYO3AOP1_1653</name>
</gene>
<accession>B2V6R9</accession>
<dbReference type="EMBL" id="CP001080">
    <property type="protein sequence ID" value="ACD67251.1"/>
    <property type="molecule type" value="Genomic_DNA"/>
</dbReference>
<dbReference type="RefSeq" id="WP_012460307.1">
    <property type="nucleotide sequence ID" value="NC_010730.1"/>
</dbReference>
<dbReference type="SMR" id="B2V6R9"/>
<dbReference type="STRING" id="436114.SYO3AOP1_1653"/>
<dbReference type="KEGG" id="sul:SYO3AOP1_1653"/>
<dbReference type="eggNOG" id="COG1706">
    <property type="taxonomic scope" value="Bacteria"/>
</dbReference>
<dbReference type="HOGENOM" id="CLU_045235_1_0_0"/>
<dbReference type="GO" id="GO:0009428">
    <property type="term" value="C:bacterial-type flagellum basal body, distal rod, P ring"/>
    <property type="evidence" value="ECO:0007669"/>
    <property type="project" value="InterPro"/>
</dbReference>
<dbReference type="GO" id="GO:0030288">
    <property type="term" value="C:outer membrane-bounded periplasmic space"/>
    <property type="evidence" value="ECO:0007669"/>
    <property type="project" value="InterPro"/>
</dbReference>
<dbReference type="GO" id="GO:0005198">
    <property type="term" value="F:structural molecule activity"/>
    <property type="evidence" value="ECO:0007669"/>
    <property type="project" value="InterPro"/>
</dbReference>
<dbReference type="GO" id="GO:0071973">
    <property type="term" value="P:bacterial-type flagellum-dependent cell motility"/>
    <property type="evidence" value="ECO:0007669"/>
    <property type="project" value="InterPro"/>
</dbReference>
<dbReference type="HAMAP" id="MF_00416">
    <property type="entry name" value="FlgI"/>
    <property type="match status" value="1"/>
</dbReference>
<dbReference type="InterPro" id="IPR001782">
    <property type="entry name" value="Flag_FlgI"/>
</dbReference>
<dbReference type="NCBIfam" id="NF003676">
    <property type="entry name" value="PRK05303.1"/>
    <property type="match status" value="1"/>
</dbReference>
<dbReference type="PANTHER" id="PTHR30381">
    <property type="entry name" value="FLAGELLAR P-RING PERIPLASMIC PROTEIN FLGI"/>
    <property type="match status" value="1"/>
</dbReference>
<dbReference type="PANTHER" id="PTHR30381:SF0">
    <property type="entry name" value="FLAGELLAR P-RING PROTEIN"/>
    <property type="match status" value="1"/>
</dbReference>
<dbReference type="Pfam" id="PF02119">
    <property type="entry name" value="FlgI"/>
    <property type="match status" value="1"/>
</dbReference>
<dbReference type="PRINTS" id="PR01010">
    <property type="entry name" value="FLGPRINGFLGI"/>
</dbReference>
<reference key="1">
    <citation type="journal article" date="2009" name="J. Bacteriol.">
        <title>Complete and draft genome sequences of six members of the Aquificales.</title>
        <authorList>
            <person name="Reysenbach A.-L."/>
            <person name="Hamamura N."/>
            <person name="Podar M."/>
            <person name="Griffiths E."/>
            <person name="Ferreira S."/>
            <person name="Hochstein R."/>
            <person name="Heidelberg J."/>
            <person name="Johnson J."/>
            <person name="Mead D."/>
            <person name="Pohorille A."/>
            <person name="Sarmiento M."/>
            <person name="Schweighofer K."/>
            <person name="Seshadri R."/>
            <person name="Voytek M.A."/>
        </authorList>
    </citation>
    <scope>NUCLEOTIDE SEQUENCE [LARGE SCALE GENOMIC DNA]</scope>
    <source>
        <strain>YO3AOP1</strain>
    </source>
</reference>
<proteinExistence type="inferred from homology"/>
<feature type="signal peptide" evidence="1">
    <location>
        <begin position="1"/>
        <end position="18"/>
    </location>
</feature>
<feature type="chain" id="PRO_5000370759" description="Flagellar P-ring protein">
    <location>
        <begin position="19"/>
        <end position="363"/>
    </location>
</feature>